<dbReference type="EMBL" id="AE014075">
    <property type="protein sequence ID" value="AAN83071.1"/>
    <property type="molecule type" value="Genomic_DNA"/>
</dbReference>
<dbReference type="RefSeq" id="WP_000116754.1">
    <property type="nucleotide sequence ID" value="NZ_CP051263.1"/>
</dbReference>
<dbReference type="STRING" id="199310.c4639"/>
<dbReference type="KEGG" id="ecc:c4639"/>
<dbReference type="eggNOG" id="ENOG5033IZG">
    <property type="taxonomic scope" value="Bacteria"/>
</dbReference>
<dbReference type="HOGENOM" id="CLU_139024_0_0_6"/>
<dbReference type="BioCyc" id="ECOL199310:C4639-MONOMER"/>
<dbReference type="Proteomes" id="UP000001410">
    <property type="component" value="Chromosome"/>
</dbReference>
<dbReference type="GO" id="GO:0005886">
    <property type="term" value="C:plasma membrane"/>
    <property type="evidence" value="ECO:0007669"/>
    <property type="project" value="UniProtKB-SubCell"/>
</dbReference>
<dbReference type="NCBIfam" id="NF007334">
    <property type="entry name" value="PRK09823.1"/>
    <property type="match status" value="1"/>
</dbReference>
<sequence>MSVSRRVIHHGLYFAVLGPLIGVLFLVLYIFFAKEPLILLVIIQVLPLFILLSITTGAIPAMLTGVMVACLPEKIGSQKRYRCLVGGIGGVVITEIYCAVIVHIKDMASSALFENILSGENLVVRIIPALLAGVVMSRIITHLPGLDISCPETDSLS</sequence>
<evidence type="ECO:0000250" key="1"/>
<evidence type="ECO:0000255" key="2"/>
<evidence type="ECO:0000305" key="3"/>
<protein>
    <recommendedName>
        <fullName>Inner membrane protein CbrB</fullName>
    </recommendedName>
</protein>
<reference key="1">
    <citation type="journal article" date="2002" name="Proc. Natl. Acad. Sci. U.S.A.">
        <title>Extensive mosaic structure revealed by the complete genome sequence of uropathogenic Escherichia coli.</title>
        <authorList>
            <person name="Welch R.A."/>
            <person name="Burland V."/>
            <person name="Plunkett G. III"/>
            <person name="Redford P."/>
            <person name="Roesch P."/>
            <person name="Rasko D."/>
            <person name="Buckles E.L."/>
            <person name="Liou S.-R."/>
            <person name="Boutin A."/>
            <person name="Hackett J."/>
            <person name="Stroud D."/>
            <person name="Mayhew G.F."/>
            <person name="Rose D.J."/>
            <person name="Zhou S."/>
            <person name="Schwartz D.C."/>
            <person name="Perna N.T."/>
            <person name="Mobley H.L.T."/>
            <person name="Donnenberg M.S."/>
            <person name="Blattner F.R."/>
        </authorList>
    </citation>
    <scope>NUCLEOTIDE SEQUENCE [LARGE SCALE GENOMIC DNA]</scope>
    <source>
        <strain>CFT073 / ATCC 700928 / UPEC</strain>
    </source>
</reference>
<proteinExistence type="inferred from homology"/>
<comment type="subcellular location">
    <subcellularLocation>
        <location evidence="1">Cell inner membrane</location>
        <topology evidence="1">Multi-pass membrane protein</topology>
    </subcellularLocation>
</comment>
<comment type="similarity">
    <text evidence="3">Belongs to the CbrB family.</text>
</comment>
<name>CBRB_ECOL6</name>
<accession>Q8FBU5</accession>
<organism>
    <name type="scientific">Escherichia coli O6:H1 (strain CFT073 / ATCC 700928 / UPEC)</name>
    <dbReference type="NCBI Taxonomy" id="199310"/>
    <lineage>
        <taxon>Bacteria</taxon>
        <taxon>Pseudomonadati</taxon>
        <taxon>Pseudomonadota</taxon>
        <taxon>Gammaproteobacteria</taxon>
        <taxon>Enterobacterales</taxon>
        <taxon>Enterobacteriaceae</taxon>
        <taxon>Escherichia</taxon>
    </lineage>
</organism>
<gene>
    <name type="primary">cbrB</name>
    <name type="ordered locus">c4639</name>
</gene>
<feature type="chain" id="PRO_0000320701" description="Inner membrane protein CbrB">
    <location>
        <begin position="1"/>
        <end position="157"/>
    </location>
</feature>
<feature type="topological domain" description="Cytoplasmic" evidence="2">
    <location>
        <begin position="1"/>
        <end position="11"/>
    </location>
</feature>
<feature type="transmembrane region" description="Helical" evidence="2">
    <location>
        <begin position="12"/>
        <end position="32"/>
    </location>
</feature>
<feature type="topological domain" description="Periplasmic" evidence="2">
    <location>
        <begin position="33"/>
        <end position="36"/>
    </location>
</feature>
<feature type="transmembrane region" description="Helical" evidence="2">
    <location>
        <begin position="37"/>
        <end position="57"/>
    </location>
</feature>
<feature type="topological domain" description="Cytoplasmic" evidence="2">
    <location>
        <begin position="58"/>
        <end position="83"/>
    </location>
</feature>
<feature type="transmembrane region" description="Helical" evidence="2">
    <location>
        <begin position="84"/>
        <end position="104"/>
    </location>
</feature>
<feature type="topological domain" description="Periplasmic" evidence="2">
    <location>
        <begin position="105"/>
        <end position="125"/>
    </location>
</feature>
<feature type="transmembrane region" description="Helical" evidence="2">
    <location>
        <begin position="126"/>
        <end position="146"/>
    </location>
</feature>
<feature type="topological domain" description="Cytoplasmic" evidence="2">
    <location>
        <begin position="147"/>
        <end position="157"/>
    </location>
</feature>
<keyword id="KW-0997">Cell inner membrane</keyword>
<keyword id="KW-1003">Cell membrane</keyword>
<keyword id="KW-0472">Membrane</keyword>
<keyword id="KW-1185">Reference proteome</keyword>
<keyword id="KW-0812">Transmembrane</keyword>
<keyword id="KW-1133">Transmembrane helix</keyword>